<dbReference type="EC" id="6.3.2.6" evidence="1"/>
<dbReference type="EMBL" id="CP000605">
    <property type="protein sequence ID" value="ACD98306.1"/>
    <property type="molecule type" value="Genomic_DNA"/>
</dbReference>
<dbReference type="RefSeq" id="WP_007051209.1">
    <property type="nucleotide sequence ID" value="NZ_AABM02000006.1"/>
</dbReference>
<dbReference type="SMR" id="B3DT37"/>
<dbReference type="GeneID" id="69577746"/>
<dbReference type="KEGG" id="blj:BLD_0860"/>
<dbReference type="HOGENOM" id="CLU_061495_2_0_11"/>
<dbReference type="UniPathway" id="UPA00074">
    <property type="reaction ID" value="UER00131"/>
</dbReference>
<dbReference type="Proteomes" id="UP000002419">
    <property type="component" value="Chromosome"/>
</dbReference>
<dbReference type="GO" id="GO:0005524">
    <property type="term" value="F:ATP binding"/>
    <property type="evidence" value="ECO:0007669"/>
    <property type="project" value="UniProtKB-KW"/>
</dbReference>
<dbReference type="GO" id="GO:0004639">
    <property type="term" value="F:phosphoribosylaminoimidazolesuccinocarboxamide synthase activity"/>
    <property type="evidence" value="ECO:0007669"/>
    <property type="project" value="UniProtKB-UniRule"/>
</dbReference>
<dbReference type="GO" id="GO:0006189">
    <property type="term" value="P:'de novo' IMP biosynthetic process"/>
    <property type="evidence" value="ECO:0007669"/>
    <property type="project" value="UniProtKB-UniRule"/>
</dbReference>
<dbReference type="GO" id="GO:0009236">
    <property type="term" value="P:cobalamin biosynthetic process"/>
    <property type="evidence" value="ECO:0007669"/>
    <property type="project" value="InterPro"/>
</dbReference>
<dbReference type="CDD" id="cd01415">
    <property type="entry name" value="SAICAR_synt_PurC"/>
    <property type="match status" value="1"/>
</dbReference>
<dbReference type="FunFam" id="3.30.470.20:FF:000006">
    <property type="entry name" value="Phosphoribosylaminoimidazole-succinocarboxamide synthase"/>
    <property type="match status" value="1"/>
</dbReference>
<dbReference type="Gene3D" id="3.30.470.20">
    <property type="entry name" value="ATP-grasp fold, B domain"/>
    <property type="match status" value="1"/>
</dbReference>
<dbReference type="Gene3D" id="3.30.200.20">
    <property type="entry name" value="Phosphorylase Kinase, domain 1"/>
    <property type="match status" value="1"/>
</dbReference>
<dbReference type="HAMAP" id="MF_00137">
    <property type="entry name" value="SAICAR_synth"/>
    <property type="match status" value="1"/>
</dbReference>
<dbReference type="InterPro" id="IPR028923">
    <property type="entry name" value="SAICAR_synt/ADE2_N"/>
</dbReference>
<dbReference type="InterPro" id="IPR033934">
    <property type="entry name" value="SAICAR_synt_PurC"/>
</dbReference>
<dbReference type="InterPro" id="IPR001636">
    <property type="entry name" value="SAICAR_synth"/>
</dbReference>
<dbReference type="InterPro" id="IPR050089">
    <property type="entry name" value="SAICAR_synthetase"/>
</dbReference>
<dbReference type="NCBIfam" id="TIGR00081">
    <property type="entry name" value="purC"/>
    <property type="match status" value="1"/>
</dbReference>
<dbReference type="PANTHER" id="PTHR43599">
    <property type="entry name" value="MULTIFUNCTIONAL PROTEIN ADE2"/>
    <property type="match status" value="1"/>
</dbReference>
<dbReference type="PANTHER" id="PTHR43599:SF3">
    <property type="entry name" value="SI:DKEY-6E2.2"/>
    <property type="match status" value="1"/>
</dbReference>
<dbReference type="Pfam" id="PF01259">
    <property type="entry name" value="SAICAR_synt"/>
    <property type="match status" value="1"/>
</dbReference>
<dbReference type="SUPFAM" id="SSF56104">
    <property type="entry name" value="SAICAR synthase-like"/>
    <property type="match status" value="1"/>
</dbReference>
<keyword id="KW-0067">ATP-binding</keyword>
<keyword id="KW-0436">Ligase</keyword>
<keyword id="KW-0547">Nucleotide-binding</keyword>
<keyword id="KW-0658">Purine biosynthesis</keyword>
<organism>
    <name type="scientific">Bifidobacterium longum (strain DJO10A)</name>
    <dbReference type="NCBI Taxonomy" id="205913"/>
    <lineage>
        <taxon>Bacteria</taxon>
        <taxon>Bacillati</taxon>
        <taxon>Actinomycetota</taxon>
        <taxon>Actinomycetes</taxon>
        <taxon>Bifidobacteriales</taxon>
        <taxon>Bifidobacteriaceae</taxon>
        <taxon>Bifidobacterium</taxon>
    </lineage>
</organism>
<name>PUR7_BIFLD</name>
<sequence>MEKLEKLYEGKAKQLYATDDPEVLWVEYKNTATAGDGEKKEDFTGKGRLNNLITTIIFDLLKKRGIDSHLIKRVDDTGQLVRKVNMFPLEIVLRNVAAGHFCSRLGVEEGLPLKEPVLEYFLKNDDLHDPFVNDDDLVALGVCTREDLAEIAPLARKINEALIEIFAKIDVKLVDFKIEMGRATDGTLLLADEITPDSCRLWDQKDHSGKVEHLDKDLFRRGLGSIIPAYEEIEERLAELAKSEGIEVAE</sequence>
<protein>
    <recommendedName>
        <fullName evidence="1">Phosphoribosylaminoimidazole-succinocarboxamide synthase</fullName>
        <ecNumber evidence="1">6.3.2.6</ecNumber>
    </recommendedName>
    <alternativeName>
        <fullName evidence="1">SAICAR synthetase</fullName>
    </alternativeName>
</protein>
<accession>B3DT37</accession>
<gene>
    <name evidence="1" type="primary">purC</name>
    <name type="ordered locus">BLD_0860</name>
</gene>
<comment type="catalytic activity">
    <reaction evidence="1">
        <text>5-amino-1-(5-phospho-D-ribosyl)imidazole-4-carboxylate + L-aspartate + ATP = (2S)-2-[5-amino-1-(5-phospho-beta-D-ribosyl)imidazole-4-carboxamido]succinate + ADP + phosphate + 2 H(+)</text>
        <dbReference type="Rhea" id="RHEA:22628"/>
        <dbReference type="ChEBI" id="CHEBI:15378"/>
        <dbReference type="ChEBI" id="CHEBI:29991"/>
        <dbReference type="ChEBI" id="CHEBI:30616"/>
        <dbReference type="ChEBI" id="CHEBI:43474"/>
        <dbReference type="ChEBI" id="CHEBI:58443"/>
        <dbReference type="ChEBI" id="CHEBI:77657"/>
        <dbReference type="ChEBI" id="CHEBI:456216"/>
        <dbReference type="EC" id="6.3.2.6"/>
    </reaction>
</comment>
<comment type="pathway">
    <text evidence="1">Purine metabolism; IMP biosynthesis via de novo pathway; 5-amino-1-(5-phospho-D-ribosyl)imidazole-4-carboxamide from 5-amino-1-(5-phospho-D-ribosyl)imidazole-4-carboxylate: step 1/2.</text>
</comment>
<comment type="similarity">
    <text evidence="1">Belongs to the SAICAR synthetase family.</text>
</comment>
<reference key="1">
    <citation type="journal article" date="2008" name="BMC Genomics">
        <title>Comparative genomic analysis of the gut bacterium Bifidobacterium longum reveals loci susceptible to deletion during pure culture growth.</title>
        <authorList>
            <person name="Lee J.H."/>
            <person name="Karamychev V.N."/>
            <person name="Kozyavkin S.A."/>
            <person name="Mills D."/>
            <person name="Pavlov A.R."/>
            <person name="Pavlova N.V."/>
            <person name="Polouchine N.N."/>
            <person name="Richardson P.M."/>
            <person name="Shakhova V.V."/>
            <person name="Slesarev A.I."/>
            <person name="Weimer B."/>
            <person name="O'Sullivan D.J."/>
        </authorList>
    </citation>
    <scope>NUCLEOTIDE SEQUENCE [LARGE SCALE GENOMIC DNA]</scope>
    <source>
        <strain>DJO10A</strain>
    </source>
</reference>
<proteinExistence type="inferred from homology"/>
<evidence type="ECO:0000255" key="1">
    <source>
        <dbReference type="HAMAP-Rule" id="MF_00137"/>
    </source>
</evidence>
<feature type="chain" id="PRO_1000095965" description="Phosphoribosylaminoimidazole-succinocarboxamide synthase">
    <location>
        <begin position="1"/>
        <end position="250"/>
    </location>
</feature>